<protein>
    <recommendedName>
        <fullName evidence="1">NADH-quinone oxidoreductase subunit H</fullName>
        <ecNumber evidence="1">7.1.1.-</ecNumber>
    </recommendedName>
    <alternativeName>
        <fullName evidence="1">NADH dehydrogenase I subunit H</fullName>
    </alternativeName>
    <alternativeName>
        <fullName evidence="1">NDH-1 subunit H</fullName>
    </alternativeName>
</protein>
<dbReference type="EC" id="7.1.1.-" evidence="1"/>
<dbReference type="EMBL" id="AE010300">
    <property type="protein sequence ID" value="AAN48088.1"/>
    <property type="molecule type" value="Genomic_DNA"/>
</dbReference>
<dbReference type="RefSeq" id="NP_711070.1">
    <property type="nucleotide sequence ID" value="NC_004342.2"/>
</dbReference>
<dbReference type="RefSeq" id="WP_001104353.1">
    <property type="nucleotide sequence ID" value="NC_004342.2"/>
</dbReference>
<dbReference type="SMR" id="Q8F7Q5"/>
<dbReference type="FunCoup" id="Q8F7Q5">
    <property type="interactions" value="151"/>
</dbReference>
<dbReference type="STRING" id="189518.LA_0889"/>
<dbReference type="PaxDb" id="189518-LA_0889"/>
<dbReference type="EnsemblBacteria" id="AAN48088">
    <property type="protein sequence ID" value="AAN48088"/>
    <property type="gene ID" value="LA_0889"/>
</dbReference>
<dbReference type="GeneID" id="61142625"/>
<dbReference type="KEGG" id="lil:LA_0889"/>
<dbReference type="PATRIC" id="fig|189518.3.peg.891"/>
<dbReference type="HOGENOM" id="CLU_015134_0_1_12"/>
<dbReference type="InParanoid" id="Q8F7Q5"/>
<dbReference type="OrthoDB" id="9803734at2"/>
<dbReference type="Proteomes" id="UP000001408">
    <property type="component" value="Chromosome I"/>
</dbReference>
<dbReference type="GO" id="GO:0005886">
    <property type="term" value="C:plasma membrane"/>
    <property type="evidence" value="ECO:0007669"/>
    <property type="project" value="UniProtKB-SubCell"/>
</dbReference>
<dbReference type="GO" id="GO:0016655">
    <property type="term" value="F:oxidoreductase activity, acting on NAD(P)H, quinone or similar compound as acceptor"/>
    <property type="evidence" value="ECO:0007669"/>
    <property type="project" value="UniProtKB-UniRule"/>
</dbReference>
<dbReference type="GO" id="GO:0048038">
    <property type="term" value="F:quinone binding"/>
    <property type="evidence" value="ECO:0007669"/>
    <property type="project" value="UniProtKB-KW"/>
</dbReference>
<dbReference type="GO" id="GO:0009060">
    <property type="term" value="P:aerobic respiration"/>
    <property type="evidence" value="ECO:0000318"/>
    <property type="project" value="GO_Central"/>
</dbReference>
<dbReference type="HAMAP" id="MF_01350">
    <property type="entry name" value="NDH1_NuoH"/>
    <property type="match status" value="1"/>
</dbReference>
<dbReference type="InterPro" id="IPR001694">
    <property type="entry name" value="NADH_UbQ_OxRdtase_su1/FPO"/>
</dbReference>
<dbReference type="InterPro" id="IPR018086">
    <property type="entry name" value="NADH_UbQ_OxRdtase_su1_CS"/>
</dbReference>
<dbReference type="NCBIfam" id="NF004741">
    <property type="entry name" value="PRK06076.1-2"/>
    <property type="match status" value="1"/>
</dbReference>
<dbReference type="PANTHER" id="PTHR11432">
    <property type="entry name" value="NADH DEHYDROGENASE SUBUNIT 1"/>
    <property type="match status" value="1"/>
</dbReference>
<dbReference type="PANTHER" id="PTHR11432:SF3">
    <property type="entry name" value="NADH-UBIQUINONE OXIDOREDUCTASE CHAIN 1"/>
    <property type="match status" value="1"/>
</dbReference>
<dbReference type="Pfam" id="PF00146">
    <property type="entry name" value="NADHdh"/>
    <property type="match status" value="1"/>
</dbReference>
<dbReference type="PROSITE" id="PS00668">
    <property type="entry name" value="COMPLEX1_ND1_2"/>
    <property type="match status" value="1"/>
</dbReference>
<feature type="chain" id="PRO_0000244921" description="NADH-quinone oxidoreductase subunit H">
    <location>
        <begin position="1"/>
        <end position="346"/>
    </location>
</feature>
<feature type="transmembrane region" description="Helical" evidence="1">
    <location>
        <begin position="6"/>
        <end position="26"/>
    </location>
</feature>
<feature type="transmembrane region" description="Helical" evidence="1">
    <location>
        <begin position="76"/>
        <end position="96"/>
    </location>
</feature>
<feature type="transmembrane region" description="Helical" evidence="1">
    <location>
        <begin position="128"/>
        <end position="148"/>
    </location>
</feature>
<feature type="transmembrane region" description="Helical" evidence="1">
    <location>
        <begin position="166"/>
        <end position="186"/>
    </location>
</feature>
<feature type="transmembrane region" description="Helical" evidence="1">
    <location>
        <begin position="198"/>
        <end position="218"/>
    </location>
</feature>
<feature type="transmembrane region" description="Helical" evidence="1">
    <location>
        <begin position="260"/>
        <end position="280"/>
    </location>
</feature>
<feature type="transmembrane region" description="Helical" evidence="1">
    <location>
        <begin position="289"/>
        <end position="309"/>
    </location>
</feature>
<feature type="transmembrane region" description="Helical" evidence="1">
    <location>
        <begin position="324"/>
        <end position="344"/>
    </location>
</feature>
<sequence length="346" mass="38964">MNWNEILFWLLKSGLFFFILITACAYYTLAERKVAGFIQDRKGPNRAGFWGLLQPLADGIKFLTKEEVFPVQVNKVMYLIAPAISMTCAIMAWSVVPLGGQIPLPSWLQEKTGLTFLDLQIANPDTGILFLFAISSLAVYGIIIAGWASNNKYSLLGAVRSTAQMISYELPLGMSVVSIVILSGSLRLTDISASQVGLWNIFKLPGFIAFCLFVVAMFAETNRLPFDLAEAESELVVGFHTEYGAFKFALFFIAEYMNMITMSCVVTLLFFGGYQVPFGILEGHVLQPLFGLVFFLGKVLFFTFLFLWVRWTLPRFRYDQLMSLGWKKLIPWAILNILIASIYIQF</sequence>
<name>NUOH_LEPIN</name>
<reference key="1">
    <citation type="journal article" date="2003" name="Nature">
        <title>Unique physiological and pathogenic features of Leptospira interrogans revealed by whole-genome sequencing.</title>
        <authorList>
            <person name="Ren S.-X."/>
            <person name="Fu G."/>
            <person name="Jiang X.-G."/>
            <person name="Zeng R."/>
            <person name="Miao Y.-G."/>
            <person name="Xu H."/>
            <person name="Zhang Y.-X."/>
            <person name="Xiong H."/>
            <person name="Lu G."/>
            <person name="Lu L.-F."/>
            <person name="Jiang H.-Q."/>
            <person name="Jia J."/>
            <person name="Tu Y.-F."/>
            <person name="Jiang J.-X."/>
            <person name="Gu W.-Y."/>
            <person name="Zhang Y.-Q."/>
            <person name="Cai Z."/>
            <person name="Sheng H.-H."/>
            <person name="Yin H.-F."/>
            <person name="Zhang Y."/>
            <person name="Zhu G.-F."/>
            <person name="Wan M."/>
            <person name="Huang H.-L."/>
            <person name="Qian Z."/>
            <person name="Wang S.-Y."/>
            <person name="Ma W."/>
            <person name="Yao Z.-J."/>
            <person name="Shen Y."/>
            <person name="Qiang B.-Q."/>
            <person name="Xia Q.-C."/>
            <person name="Guo X.-K."/>
            <person name="Danchin A."/>
            <person name="Saint Girons I."/>
            <person name="Somerville R.L."/>
            <person name="Wen Y.-M."/>
            <person name="Shi M.-H."/>
            <person name="Chen Z."/>
            <person name="Xu J.-G."/>
            <person name="Zhao G.-P."/>
        </authorList>
    </citation>
    <scope>NUCLEOTIDE SEQUENCE [LARGE SCALE GENOMIC DNA]</scope>
    <source>
        <strain>56601</strain>
    </source>
</reference>
<accession>Q8F7Q5</accession>
<gene>
    <name evidence="1" type="primary">nuoH</name>
    <name type="ordered locus">LA_0889</name>
</gene>
<evidence type="ECO:0000255" key="1">
    <source>
        <dbReference type="HAMAP-Rule" id="MF_01350"/>
    </source>
</evidence>
<organism>
    <name type="scientific">Leptospira interrogans serogroup Icterohaemorrhagiae serovar Lai (strain 56601)</name>
    <dbReference type="NCBI Taxonomy" id="189518"/>
    <lineage>
        <taxon>Bacteria</taxon>
        <taxon>Pseudomonadati</taxon>
        <taxon>Spirochaetota</taxon>
        <taxon>Spirochaetia</taxon>
        <taxon>Leptospirales</taxon>
        <taxon>Leptospiraceae</taxon>
        <taxon>Leptospira</taxon>
    </lineage>
</organism>
<comment type="function">
    <text evidence="1">NDH-1 shuttles electrons from NADH, via FMN and iron-sulfur (Fe-S) centers, to quinones in the respiratory chain. The immediate electron acceptor for the enzyme in this species is believed to be ubiquinone. Couples the redox reaction to proton translocation (for every two electrons transferred, four hydrogen ions are translocated across the cytoplasmic membrane), and thus conserves the redox energy in a proton gradient. This subunit may bind ubiquinone.</text>
</comment>
<comment type="catalytic activity">
    <reaction evidence="1">
        <text>a quinone + NADH + 5 H(+)(in) = a quinol + NAD(+) + 4 H(+)(out)</text>
        <dbReference type="Rhea" id="RHEA:57888"/>
        <dbReference type="ChEBI" id="CHEBI:15378"/>
        <dbReference type="ChEBI" id="CHEBI:24646"/>
        <dbReference type="ChEBI" id="CHEBI:57540"/>
        <dbReference type="ChEBI" id="CHEBI:57945"/>
        <dbReference type="ChEBI" id="CHEBI:132124"/>
    </reaction>
</comment>
<comment type="subunit">
    <text evidence="1">NDH-1 is composed of 14 different subunits. Subunits NuoA, H, J, K, L, M, N constitute the membrane sector of the complex.</text>
</comment>
<comment type="subcellular location">
    <subcellularLocation>
        <location evidence="1">Cell inner membrane</location>
        <topology evidence="1">Multi-pass membrane protein</topology>
    </subcellularLocation>
</comment>
<comment type="similarity">
    <text evidence="1">Belongs to the complex I subunit 1 family.</text>
</comment>
<keyword id="KW-0997">Cell inner membrane</keyword>
<keyword id="KW-1003">Cell membrane</keyword>
<keyword id="KW-0472">Membrane</keyword>
<keyword id="KW-0520">NAD</keyword>
<keyword id="KW-0874">Quinone</keyword>
<keyword id="KW-1185">Reference proteome</keyword>
<keyword id="KW-1278">Translocase</keyword>
<keyword id="KW-0812">Transmembrane</keyword>
<keyword id="KW-1133">Transmembrane helix</keyword>
<keyword id="KW-0830">Ubiquinone</keyword>
<proteinExistence type="inferred from homology"/>